<feature type="chain" id="PRO_0000403176" description="Allophycocyanin subunit alpha-B">
    <location>
        <begin position="1"/>
        <end position="161"/>
    </location>
</feature>
<feature type="binding site" description="covalent" evidence="2">
    <location>
        <position position="81"/>
    </location>
    <ligand>
        <name>(2R,3E)-phycocyanobilin</name>
        <dbReference type="ChEBI" id="CHEBI:85275"/>
    </ligand>
</feature>
<feature type="modified residue" description="N4-methylasparagine" evidence="1">
    <location>
        <position position="71"/>
    </location>
</feature>
<sequence>MSVVSQVILRADDELRYPSSGELSGIKNFLATGAVRIRIAEALADNEKKIVDQAQKQLFSIHPEYRTSGGNAATTKQYNQCLRDYGWYLRLVTYGILAGDKDPIERIGLIGVKEMYNALGVPVPGMVDAIRCLKDAALGVLDSEEARIAAPYFDFITQAMS</sequence>
<name>APCD_PICP2</name>
<accession>O68966</accession>
<evidence type="ECO:0000250" key="1"/>
<evidence type="ECO:0000305" key="2"/>
<keyword id="KW-0002">3D-structure</keyword>
<keyword id="KW-0042">Antenna complex</keyword>
<keyword id="KW-0089">Bile pigment</keyword>
<keyword id="KW-0157">Chromophore</keyword>
<keyword id="KW-0249">Electron transport</keyword>
<keyword id="KW-0472">Membrane</keyword>
<keyword id="KW-0488">Methylation</keyword>
<keyword id="KW-0602">Photosynthesis</keyword>
<keyword id="KW-0605">Phycobilisome</keyword>
<keyword id="KW-1185">Reference proteome</keyword>
<keyword id="KW-0793">Thylakoid</keyword>
<keyword id="KW-0813">Transport</keyword>
<protein>
    <recommendedName>
        <fullName>Allophycocyanin subunit alpha-B</fullName>
    </recommendedName>
    <alternativeName>
        <fullName>alpha-AP-B</fullName>
    </alternativeName>
</protein>
<comment type="function">
    <text evidence="1">A variant alpha-allophycocyanin (AP) which forms a complex with beta-AP with maximum absorption at approximately 670 nanometers. It is an important phycobilisome terminal emitter involved in energy transfer to photosystem I (By similarity).</text>
</comment>
<comment type="subunit">
    <text evidence="1">Heterodimer of an alpha-B and a beta chain forming AP-B.</text>
</comment>
<comment type="subcellular location">
    <subcellularLocation>
        <location evidence="1">Cellular thylakoid membrane</location>
        <topology evidence="1">Peripheral membrane protein</topology>
        <orientation evidence="1">Cytoplasmic side</orientation>
    </subcellularLocation>
</comment>
<comment type="PTM">
    <text>Contains one covalently linked bilin chromophore. The chromophore is added by phycocyanobilin lyase CpcUS.</text>
</comment>
<comment type="similarity">
    <text evidence="2">Belongs to the phycobiliprotein family.</text>
</comment>
<gene>
    <name type="primary">apcD</name>
    <name type="ordered locus">SYNPCC7002_A2140</name>
</gene>
<reference key="1">
    <citation type="submission" date="1998-04" db="EMBL/GenBank/DDBJ databases">
        <title>Cloning and characterization of the apcD gene of Synechococcus sp. PCC 7002.</title>
        <authorList>
            <person name="Zhou J."/>
            <person name="Stirewalt V.L."/>
            <person name="Bryant D.A."/>
        </authorList>
    </citation>
    <scope>NUCLEOTIDE SEQUENCE [GENOMIC DNA]</scope>
    <source>
        <strain>ATCC 27264 / PCC 7002 / PR-6</strain>
    </source>
</reference>
<reference key="2">
    <citation type="submission" date="2008-02" db="EMBL/GenBank/DDBJ databases">
        <title>Complete sequence of Synechococcus sp. PCC 7002.</title>
        <authorList>
            <person name="Li T."/>
            <person name="Zhao J."/>
            <person name="Zhao C."/>
            <person name="Liu Z."/>
            <person name="Zhao F."/>
            <person name="Marquardt J."/>
            <person name="Nomura C.T."/>
            <person name="Persson S."/>
            <person name="Detter J.C."/>
            <person name="Richardson P.M."/>
            <person name="Lanz C."/>
            <person name="Schuster S.C."/>
            <person name="Wang J."/>
            <person name="Li S."/>
            <person name="Huang X."/>
            <person name="Cai T."/>
            <person name="Yu Z."/>
            <person name="Luo J."/>
            <person name="Zhao J."/>
            <person name="Bryant D.A."/>
        </authorList>
    </citation>
    <scope>NUCLEOTIDE SEQUENCE [LARGE SCALE GENOMIC DNA]</scope>
    <source>
        <strain>ATCC 27264 / PCC 7002 / PR-6</strain>
    </source>
</reference>
<reference key="3">
    <citation type="journal article" date="2010" name="Appl. Environ. Microbiol.">
        <title>Biosynthesis of cyanobacterial phycobiliproteins in Escherichia coli: chromophorylation efficiency and specificity of all bilin lyases from Synechococcus sp. strain PCC 7002.</title>
        <authorList>
            <person name="Biswas A."/>
            <person name="Vasquez Y.M."/>
            <person name="Dragomani T.M."/>
            <person name="Kronfel M.L."/>
            <person name="Williams S.R."/>
            <person name="Alvey R.M."/>
            <person name="Bryant D.A."/>
            <person name="Schluchter W.M."/>
        </authorList>
    </citation>
    <scope>CHROMOPHORE ATTACHMENT</scope>
    <source>
        <strain>ATCC 27264 / PCC 7002 / PR-6</strain>
    </source>
</reference>
<proteinExistence type="evidence at protein level"/>
<organism>
    <name type="scientific">Picosynechococcus sp. (strain ATCC 27264 / PCC 7002 / PR-6)</name>
    <name type="common">Agmenellum quadruplicatum</name>
    <dbReference type="NCBI Taxonomy" id="32049"/>
    <lineage>
        <taxon>Bacteria</taxon>
        <taxon>Bacillati</taxon>
        <taxon>Cyanobacteriota</taxon>
        <taxon>Cyanophyceae</taxon>
        <taxon>Oscillatoriophycideae</taxon>
        <taxon>Chroococcales</taxon>
        <taxon>Geminocystaceae</taxon>
        <taxon>Picosynechococcus</taxon>
    </lineage>
</organism>
<dbReference type="EMBL" id="AF059337">
    <property type="protein sequence ID" value="AAC14716.1"/>
    <property type="molecule type" value="Genomic_DNA"/>
</dbReference>
<dbReference type="EMBL" id="CP000951">
    <property type="protein sequence ID" value="ACB00121.1"/>
    <property type="molecule type" value="Genomic_DNA"/>
</dbReference>
<dbReference type="RefSeq" id="WP_012307741.1">
    <property type="nucleotide sequence ID" value="NZ_JAHHPU010000017.1"/>
</dbReference>
<dbReference type="PDB" id="7EXT">
    <property type="method" value="EM"/>
    <property type="resolution" value="3.50 A"/>
    <property type="chains" value="V3/m3=1-161"/>
</dbReference>
<dbReference type="PDBsum" id="7EXT"/>
<dbReference type="SMR" id="O68966"/>
<dbReference type="STRING" id="32049.SYNPCC7002_A2140"/>
<dbReference type="KEGG" id="syp:SYNPCC7002_A2140"/>
<dbReference type="eggNOG" id="ENOG502Z81S">
    <property type="taxonomic scope" value="Bacteria"/>
</dbReference>
<dbReference type="HOGENOM" id="CLU_104219_2_0_3"/>
<dbReference type="Proteomes" id="UP000001688">
    <property type="component" value="Chromosome"/>
</dbReference>
<dbReference type="GO" id="GO:0030089">
    <property type="term" value="C:phycobilisome"/>
    <property type="evidence" value="ECO:0007669"/>
    <property type="project" value="UniProtKB-KW"/>
</dbReference>
<dbReference type="GO" id="GO:0031676">
    <property type="term" value="C:plasma membrane-derived thylakoid membrane"/>
    <property type="evidence" value="ECO:0007669"/>
    <property type="project" value="UniProtKB-SubCell"/>
</dbReference>
<dbReference type="GO" id="GO:0015979">
    <property type="term" value="P:photosynthesis"/>
    <property type="evidence" value="ECO:0007669"/>
    <property type="project" value="UniProtKB-KW"/>
</dbReference>
<dbReference type="CDD" id="cd12125">
    <property type="entry name" value="APC_alpha"/>
    <property type="match status" value="1"/>
</dbReference>
<dbReference type="Gene3D" id="1.10.490.20">
    <property type="entry name" value="Phycocyanins"/>
    <property type="match status" value="1"/>
</dbReference>
<dbReference type="InterPro" id="IPR009050">
    <property type="entry name" value="Globin-like_sf"/>
</dbReference>
<dbReference type="InterPro" id="IPR012128">
    <property type="entry name" value="Phycobilisome_asu/bsu"/>
</dbReference>
<dbReference type="InterPro" id="IPR038719">
    <property type="entry name" value="Phycobilisome_asu/bsu_sf"/>
</dbReference>
<dbReference type="PANTHER" id="PTHR34011:SF2">
    <property type="entry name" value="ALLOPHYCOCYANIN ALPHA CHAIN"/>
    <property type="match status" value="1"/>
</dbReference>
<dbReference type="PANTHER" id="PTHR34011">
    <property type="entry name" value="PHYCOBILISOME 32.1 KDA LINKER POLYPEPTIDE, PHYCOCYANIN-ASSOCIATED, ROD 2-RELATED"/>
    <property type="match status" value="1"/>
</dbReference>
<dbReference type="Pfam" id="PF00502">
    <property type="entry name" value="Phycobilisome"/>
    <property type="match status" value="1"/>
</dbReference>
<dbReference type="PIRSF" id="PIRSF000081">
    <property type="entry name" value="Phycocyanin"/>
    <property type="match status" value="1"/>
</dbReference>
<dbReference type="SUPFAM" id="SSF46458">
    <property type="entry name" value="Globin-like"/>
    <property type="match status" value="1"/>
</dbReference>